<sequence>MPDHSLFRLRILPWCIALAMSGSYSSVWAEDDIQFDSRFLELKGDTKIDLKRFSSQGYVEPGKYNLQVQLNKQPLAEEYDIYWYAGEDDVSKSYACLTPELVAQFGLKEDVAKNLQWSHDGKCLKPGQLEGVEIKADLSQSALVISLPQAYLEYTWPDWDPPSRWDDGISGIIADYSITAQTRHEENGGDDSNEISGNGTVGVNLGPWRMRADWQTNYQHTRSNDDDDEFGGDDTQKKWEWSRYYAWRALPSLKAKLALGEDYLNSDIFDGFNYVGGSVSTDDQMLPPNLRGYAPDISGVAHTTAKVTVSQMGRVIYETQVPAGPFRIQDLGDSVSGTLHIRIEEQNGQVQEYDISTASMPYLTRPGQVRYKIMMGRPQEWGHHVEGGFFSGAEASWGIANGWSLYGGALGDENYQSAALGVGRDLSTFGAVAFDVTHSHTKLDKDTAYGKGSLDGNSFRVSYSKDFDQLNSRVTFAGYRFSEENFMTMSEYLDASDSEMVRTGNDKEMYTATYNQNFRDAGVSVYLNYTRHTYWDREEQTNYNIMLSHYFNMGSIRNMSVSLTGYRYEYDNRADKGMYISLSMPWGDNSTVSYNGNYGSGTDSSQVGYFSRVDDATHYQLNIGTSDKHTSVDGYYSHDGSLAQVDLSANYHEGQYTSAGLSLQGGATLTTHGGALHRTQNMGGTRLLIDADGVADVPVEGNGAAVYTNMFGKAVVSDVNNYYRNQAYIDLNKLPENAEATQSVVQATLTEGAIGYRKFAVISGQKAMAVLRLQDGSHPPFGAEVKNDNEQTVGLVDDDGSVYLAGVKPGEHMSVFWSGVAHCDINLPDPLPADLFNGLLLPCQHKGNVAPVVPDDIKPVIQEQTQQVTPTDPPVSVSANQ</sequence>
<gene>
    <name type="primary">yfcU</name>
    <name type="synonym">yfcT</name>
    <name type="ordered locus">b4661</name>
    <name type="ordered locus">JW2334/JW2335</name>
    <name type="ORF">b2337</name>
    <name type="ORF">b2338</name>
</gene>
<reference key="1">
    <citation type="journal article" date="1997" name="DNA Res.">
        <title>Construction of a contiguous 874-kb sequence of the Escherichia coli-K12 genome corresponding to 50.0-68.8 min on the linkage map and analysis of its sequence features.</title>
        <authorList>
            <person name="Yamamoto Y."/>
            <person name="Aiba H."/>
            <person name="Baba T."/>
            <person name="Hayashi K."/>
            <person name="Inada T."/>
            <person name="Isono K."/>
            <person name="Itoh T."/>
            <person name="Kimura S."/>
            <person name="Kitagawa M."/>
            <person name="Makino K."/>
            <person name="Miki T."/>
            <person name="Mitsuhashi N."/>
            <person name="Mizobuchi K."/>
            <person name="Mori H."/>
            <person name="Nakade S."/>
            <person name="Nakamura Y."/>
            <person name="Nashimoto H."/>
            <person name="Oshima T."/>
            <person name="Oyama S."/>
            <person name="Saito N."/>
            <person name="Sampei G."/>
            <person name="Satoh Y."/>
            <person name="Sivasundaram S."/>
            <person name="Tagami H."/>
            <person name="Takahashi H."/>
            <person name="Takeda J."/>
            <person name="Takemoto K."/>
            <person name="Uehara K."/>
            <person name="Wada C."/>
            <person name="Yamagata S."/>
            <person name="Horiuchi T."/>
        </authorList>
    </citation>
    <scope>NUCLEOTIDE SEQUENCE [LARGE SCALE GENOMIC DNA]</scope>
    <source>
        <strain>K12 / W3110 / ATCC 27325 / DSM 5911</strain>
    </source>
</reference>
<reference key="2">
    <citation type="journal article" date="1997" name="Science">
        <title>The complete genome sequence of Escherichia coli K-12.</title>
        <authorList>
            <person name="Blattner F.R."/>
            <person name="Plunkett G. III"/>
            <person name="Bloch C.A."/>
            <person name="Perna N.T."/>
            <person name="Burland V."/>
            <person name="Riley M."/>
            <person name="Collado-Vides J."/>
            <person name="Glasner J.D."/>
            <person name="Rode C.K."/>
            <person name="Mayhew G.F."/>
            <person name="Gregor J."/>
            <person name="Davis N.W."/>
            <person name="Kirkpatrick H.A."/>
            <person name="Goeden M.A."/>
            <person name="Rose D.J."/>
            <person name="Mau B."/>
            <person name="Shao Y."/>
        </authorList>
    </citation>
    <scope>NUCLEOTIDE SEQUENCE [LARGE SCALE GENOMIC DNA]</scope>
    <source>
        <strain>K12 / MG1655 / ATCC 47076</strain>
    </source>
</reference>
<reference key="3">
    <citation type="journal article" date="2006" name="Mol. Syst. Biol.">
        <title>Highly accurate genome sequences of Escherichia coli K-12 strains MG1655 and W3110.</title>
        <authorList>
            <person name="Hayashi K."/>
            <person name="Morooka N."/>
            <person name="Yamamoto Y."/>
            <person name="Fujita K."/>
            <person name="Isono K."/>
            <person name="Choi S."/>
            <person name="Ohtsubo E."/>
            <person name="Baba T."/>
            <person name="Wanner B.L."/>
            <person name="Mori H."/>
            <person name="Horiuchi T."/>
        </authorList>
    </citation>
    <scope>NUCLEOTIDE SEQUENCE [LARGE SCALE GENOMIC DNA]</scope>
    <source>
        <strain>K12 / W3110 / ATCC 27325 / DSM 5911</strain>
    </source>
</reference>
<reference key="4">
    <citation type="journal article" date="2010" name="Environ. Microbiol.">
        <title>Escherichia coli K-12 possesses multiple cryptic but functional chaperone-usher fimbriae with distinct surface specificities.</title>
        <authorList>
            <person name="Korea C.G."/>
            <person name="Badouraly R."/>
            <person name="Prevost M.C."/>
            <person name="Ghigo J.M."/>
            <person name="Beloin C."/>
        </authorList>
    </citation>
    <scope>FUNCTION</scope>
    <scope>INDUCTION</scope>
    <scope>DISRUPTION PHENOTYPE</scope>
    <source>
        <strain>K12 / MG1655 / ATCC 47076</strain>
    </source>
</reference>
<proteinExistence type="uncertain"/>
<name>YFCU_ECOLI</name>
<dbReference type="EMBL" id="U00096">
    <property type="status" value="NOT_ANNOTATED_CDS"/>
    <property type="molecule type" value="Genomic_DNA"/>
</dbReference>
<dbReference type="EMBL" id="AP009048">
    <property type="protein sequence ID" value="BAA16191.1"/>
    <property type="status" value="ALT_INIT"/>
    <property type="molecule type" value="Genomic_DNA"/>
</dbReference>
<dbReference type="EMBL" id="AP009048">
    <property type="protein sequence ID" value="BAA16192.1"/>
    <property type="status" value="ALT_SEQ"/>
    <property type="molecule type" value="Genomic_DNA"/>
</dbReference>
<dbReference type="PIR" id="G65006">
    <property type="entry name" value="G65006"/>
</dbReference>
<dbReference type="PIR" id="H65006">
    <property type="entry name" value="H65006"/>
</dbReference>
<dbReference type="SMR" id="P77196"/>
<dbReference type="BioGRID" id="4261776">
    <property type="interactions" value="11"/>
</dbReference>
<dbReference type="BioGRID" id="4262083">
    <property type="interactions" value="227"/>
</dbReference>
<dbReference type="DIP" id="DIP-11989N"/>
<dbReference type="FunCoup" id="P77196">
    <property type="interactions" value="188"/>
</dbReference>
<dbReference type="IntAct" id="P77196">
    <property type="interactions" value="20"/>
</dbReference>
<dbReference type="KEGG" id="ecj:JW2334"/>
<dbReference type="KEGG" id="ecj:JW2335"/>
<dbReference type="EchoBASE" id="EB3876"/>
<dbReference type="eggNOG" id="COG3188">
    <property type="taxonomic scope" value="Bacteria"/>
</dbReference>
<dbReference type="HOGENOM" id="CLU_009120_2_2_6"/>
<dbReference type="InParanoid" id="P77196"/>
<dbReference type="PhylomeDB" id="P77196"/>
<dbReference type="Proteomes" id="UP000000625">
    <property type="component" value="Chromosome"/>
</dbReference>
<dbReference type="GO" id="GO:0009279">
    <property type="term" value="C:cell outer membrane"/>
    <property type="evidence" value="ECO:0000318"/>
    <property type="project" value="GO_Central"/>
</dbReference>
<dbReference type="GO" id="GO:0015473">
    <property type="term" value="F:fimbrial usher porin activity"/>
    <property type="evidence" value="ECO:0000318"/>
    <property type="project" value="GO_Central"/>
</dbReference>
<dbReference type="GO" id="GO:0009297">
    <property type="term" value="P:pilus assembly"/>
    <property type="evidence" value="ECO:0000318"/>
    <property type="project" value="GO_Central"/>
</dbReference>
<dbReference type="Gene3D" id="2.60.40.2070">
    <property type="match status" value="1"/>
</dbReference>
<dbReference type="Gene3D" id="2.60.40.3110">
    <property type="match status" value="1"/>
</dbReference>
<dbReference type="Gene3D" id="3.10.20.410">
    <property type="match status" value="1"/>
</dbReference>
<dbReference type="Gene3D" id="2.60.40.2610">
    <property type="entry name" value="Outer membrane usher protein FimD, plug domain"/>
    <property type="match status" value="1"/>
</dbReference>
<dbReference type="InterPro" id="IPR000015">
    <property type="entry name" value="Fimb_usher"/>
</dbReference>
<dbReference type="InterPro" id="IPR018030">
    <property type="entry name" value="Fimbrial_membr_usher_CS"/>
</dbReference>
<dbReference type="InterPro" id="IPR042186">
    <property type="entry name" value="FimD_plug_dom"/>
</dbReference>
<dbReference type="InterPro" id="IPR025949">
    <property type="entry name" value="PapC-like_C"/>
</dbReference>
<dbReference type="InterPro" id="IPR043142">
    <property type="entry name" value="PapC-like_C_sf"/>
</dbReference>
<dbReference type="InterPro" id="IPR025885">
    <property type="entry name" value="PapC_N"/>
</dbReference>
<dbReference type="InterPro" id="IPR037224">
    <property type="entry name" value="PapC_N_sf"/>
</dbReference>
<dbReference type="NCBIfam" id="NF011812">
    <property type="entry name" value="PRK15284.1"/>
    <property type="match status" value="1"/>
</dbReference>
<dbReference type="PANTHER" id="PTHR30451">
    <property type="entry name" value="OUTER MEMBRANE USHER PROTEIN"/>
    <property type="match status" value="1"/>
</dbReference>
<dbReference type="PANTHER" id="PTHR30451:SF10">
    <property type="entry name" value="OUTER MEMBRANE USHER PROTEIN YFCU-RELATED"/>
    <property type="match status" value="1"/>
</dbReference>
<dbReference type="Pfam" id="PF13953">
    <property type="entry name" value="PapC_C"/>
    <property type="match status" value="1"/>
</dbReference>
<dbReference type="Pfam" id="PF13954">
    <property type="entry name" value="PapC_N"/>
    <property type="match status" value="1"/>
</dbReference>
<dbReference type="Pfam" id="PF00577">
    <property type="entry name" value="Usher"/>
    <property type="match status" value="1"/>
</dbReference>
<dbReference type="SUPFAM" id="SSF141729">
    <property type="entry name" value="FimD N-terminal domain-like"/>
    <property type="match status" value="1"/>
</dbReference>
<dbReference type="PROSITE" id="PS01151">
    <property type="entry name" value="FIMBRIAL_USHER"/>
    <property type="match status" value="1"/>
</dbReference>
<keyword id="KW-0998">Cell outer membrane</keyword>
<keyword id="KW-1029">Fimbrium biogenesis</keyword>
<keyword id="KW-0472">Membrane</keyword>
<keyword id="KW-1185">Reference proteome</keyword>
<keyword id="KW-0732">Signal</keyword>
<keyword id="KW-0812">Transmembrane</keyword>
<keyword id="KW-1134">Transmembrane beta strand</keyword>
<keyword id="KW-0813">Transport</keyword>
<comment type="function">
    <text evidence="3">Part of the yfcOPQRSUV fimbrial operon. Could contribute to adhesion to various surfaces in specific environmental niches. Increases adhesion to eukaryotic T24 bladder epithelial cells in the absence of fim genes. Probably involved in the export and assembly of fimbrial subunits across the outer membrane.</text>
</comment>
<comment type="subcellular location">
    <subcellularLocation>
        <location evidence="1">Cell outer membrane</location>
        <topology evidence="1">Multi-pass membrane protein</topology>
    </subcellularLocation>
</comment>
<comment type="induction">
    <text evidence="3">Expression is negatively regulated by H-NS and subjected to cAMP receptor protein (CRP)-mediated catabolite repression.</text>
</comment>
<comment type="disruption phenotype">
    <text evidence="3">Deletion of the operon under classical laboratory conditions does not result in any major effect on E.coli capacity to form biofilms compared with the wild-type strain.</text>
</comment>
<comment type="miscellaneous">
    <text evidence="5">The operon is cryptic under classical laboratory conditions, but is functional when constitutively expressed.</text>
</comment>
<comment type="similarity">
    <text evidence="4">Belongs to the fimbrial export usher family.</text>
</comment>
<comment type="caution">
    <text evidence="4">Could be the product of a pseudogene. This sequence is interrupted by a stop codon.</text>
</comment>
<comment type="sequence caution" evidence="4">
    <conflict type="erroneous initiation">
        <sequence resource="EMBL-CDS" id="BAA16191"/>
    </conflict>
</comment>
<comment type="sequence caution" evidence="4">
    <conflict type="erroneous termination">
        <sequence resource="EMBL-CDS" id="BAA16192"/>
    </conflict>
    <text>Truncated C-terminus.</text>
</comment>
<comment type="sequence caution" evidence="4">
    <conflict type="erroneous termination">
        <sequence resource="EMBL" id="U00096"/>
    </conflict>
    <text>Truncated C-terminus.</text>
</comment>
<feature type="signal peptide" evidence="2">
    <location>
        <begin position="1"/>
        <end position="29"/>
    </location>
</feature>
<feature type="chain" id="PRO_0000009332" description="Putative outer membrane usher protein YfcU">
    <location>
        <begin position="30"/>
        <end position="881"/>
    </location>
</feature>
<protein>
    <recommendedName>
        <fullName>Putative outer membrane usher protein YfcU</fullName>
    </recommendedName>
</protein>
<organism>
    <name type="scientific">Escherichia coli (strain K12)</name>
    <dbReference type="NCBI Taxonomy" id="83333"/>
    <lineage>
        <taxon>Bacteria</taxon>
        <taxon>Pseudomonadati</taxon>
        <taxon>Pseudomonadota</taxon>
        <taxon>Gammaproteobacteria</taxon>
        <taxon>Enterobacterales</taxon>
        <taxon>Enterobacteriaceae</taxon>
        <taxon>Escherichia</taxon>
    </lineage>
</organism>
<evidence type="ECO:0000250" key="1"/>
<evidence type="ECO:0000255" key="2"/>
<evidence type="ECO:0000269" key="3">
    <source>
    </source>
</evidence>
<evidence type="ECO:0000305" key="4"/>
<evidence type="ECO:0000305" key="5">
    <source>
    </source>
</evidence>
<accession>P77196</accession>
<accession>P77532</accession>